<proteinExistence type="inferred from homology"/>
<organism>
    <name type="scientific">Streptococcus thermophilus</name>
    <dbReference type="NCBI Taxonomy" id="1308"/>
    <lineage>
        <taxon>Bacteria</taxon>
        <taxon>Bacillati</taxon>
        <taxon>Bacillota</taxon>
        <taxon>Bacilli</taxon>
        <taxon>Lactobacillales</taxon>
        <taxon>Streptococcaceae</taxon>
        <taxon>Streptococcus</taxon>
    </lineage>
</organism>
<feature type="chain" id="PRO_0000235974" description="Capsular polysaccharide phosphotransferase eps5J">
    <location>
        <begin position="1"/>
        <end position="238"/>
    </location>
</feature>
<gene>
    <name type="primary">eps5J</name>
</gene>
<dbReference type="EC" id="2.7.-.-"/>
<dbReference type="EMBL" id="AF454496">
    <property type="protein sequence ID" value="AAN63705.1"/>
    <property type="molecule type" value="Genomic_DNA"/>
</dbReference>
<dbReference type="SMR" id="Q8GPD3"/>
<dbReference type="GO" id="GO:0016772">
    <property type="term" value="F:transferase activity, transferring phosphorus-containing groups"/>
    <property type="evidence" value="ECO:0007669"/>
    <property type="project" value="InterPro"/>
</dbReference>
<dbReference type="GO" id="GO:0000271">
    <property type="term" value="P:polysaccharide biosynthetic process"/>
    <property type="evidence" value="ECO:0007669"/>
    <property type="project" value="UniProtKB-KW"/>
</dbReference>
<dbReference type="InterPro" id="IPR047141">
    <property type="entry name" value="Stealth"/>
</dbReference>
<dbReference type="InterPro" id="IPR031358">
    <property type="entry name" value="Stealth_CR1"/>
</dbReference>
<dbReference type="InterPro" id="IPR021520">
    <property type="entry name" value="Stealth_CR2"/>
</dbReference>
<dbReference type="PANTHER" id="PTHR24045">
    <property type="match status" value="1"/>
</dbReference>
<dbReference type="PANTHER" id="PTHR24045:SF0">
    <property type="entry name" value="N-ACETYLGLUCOSAMINE-1-PHOSPHOTRANSFERASE SUBUNITS ALPHA_BETA"/>
    <property type="match status" value="1"/>
</dbReference>
<dbReference type="Pfam" id="PF17101">
    <property type="entry name" value="Stealth_CR1"/>
    <property type="match status" value="1"/>
</dbReference>
<dbReference type="Pfam" id="PF11380">
    <property type="entry name" value="Stealth_CR2"/>
    <property type="match status" value="1"/>
</dbReference>
<comment type="miscellaneous">
    <text>Stealth proteins are part of a protein family that is conserved from bacteria to higher eukaryotes. Family members were first identified in microbes as proteins that help pathogens to elude the host innate immune system. Microbial stealth proteins are involved in the biosynthesis of exopolysaccharides. Stealth proteins are predicted to function as hexose-1-phosphoryltransferases.</text>
</comment>
<comment type="similarity">
    <text evidence="1">Belongs to the stealth family.</text>
</comment>
<reference key="1">
    <citation type="submission" date="2001-12" db="EMBL/GenBank/DDBJ databases">
        <title>Diversity of eps operons in Streptococcus thermophilus.</title>
        <authorList>
            <person name="Rallu F."/>
            <person name="Ehrlich D.S."/>
            <person name="Renault P."/>
        </authorList>
    </citation>
    <scope>NUCLEOTIDE SEQUENCE [GENOMIC DNA]</scope>
</reference>
<reference key="2">
    <citation type="journal article" date="2005" name="PLoS Comput. Biol.">
        <title>Stealth proteins: in silico identification of a novel protein family rendering bacterial pathogens invisible to host immune defense.</title>
        <authorList>
            <person name="Sperisen P."/>
            <person name="Schmid C.D."/>
            <person name="Bucher P."/>
            <person name="Zilian O."/>
        </authorList>
    </citation>
    <scope>IDENTIFICATION AS A STEALTH PROTEIN</scope>
    <scope>PREDICTION OF FUNCTION</scope>
</reference>
<protein>
    <recommendedName>
        <fullName>Capsular polysaccharide phosphotransferase eps5J</fullName>
        <ecNumber>2.7.-.-</ecNumber>
    </recommendedName>
    <alternativeName>
        <fullName>Stealth protein eps5J</fullName>
    </alternativeName>
</protein>
<keyword id="KW-0270">Exopolysaccharide synthesis</keyword>
<keyword id="KW-0808">Transferase</keyword>
<accession>Q8GPD3</accession>
<sequence length="238" mass="29110">MDFVVLWVDGNDPEFIREKNKYTPHNRKIDNDEDNVHRYRDYGTFNYWFRMVERHAPWVNNIYLITNGQRPKWLNVNHPKLKWVRHEEFIPKEYLPIFNASAIEMNIHRIDGLSENFVLFNDDMYLIQDVKYSDFFVNEKPKLLAIYEALVPWSRFSKIYFNDVLVLYRHFPNKKALRQSPFKFFNIKYGQLMLKNRLHNFHGGFTHYRNYRAKIGRHIWFFEGNFLFTSGTKCFQFI</sequence>
<evidence type="ECO:0000305" key="1"/>
<name>EPS5J_STRTR</name>